<protein>
    <recommendedName>
        <fullName evidence="1">tRNA U34 carboxymethyltransferase</fullName>
        <ecNumber evidence="1">2.5.1.-</ecNumber>
    </recommendedName>
</protein>
<gene>
    <name evidence="1" type="primary">cmoB</name>
    <name type="ordered locus">Maqu_2763</name>
</gene>
<proteinExistence type="inferred from homology"/>
<name>CMOB_MARN8</name>
<sequence length="330" mass="37651">MALFDWHKHFDPVLSYLNETGNTRWTTALKEQLTRRFEDNPHGDMERWHNALQSLPDVADARVDLNRSAITLTSPSGLDPDAMTRLENGLRGLMPWRKGPFDFFGTYIDTEWRSDWKWDRVAPHLADLAGRTILDVGCGSGYHCWRMAGAGARQVIGIDPGLLFMFQFLAVKGYLGQAPVDLLPVRMEDLPADMECFDTTFSMGVLYHRRSPLDHLLELKGTLRRGGELVLETLVVDGPEGYSLMPEDRYGQMRNVWFLPSCPTLLRWLDRTGFRNARVVDVSETTTDEQRQTDWMRFNSLADFLDPDNPSKTIEGYPGPKRATLIAEKP</sequence>
<organism>
    <name type="scientific">Marinobacter nauticus (strain ATCC 700491 / DSM 11845 / VT8)</name>
    <name type="common">Marinobacter aquaeolei</name>
    <dbReference type="NCBI Taxonomy" id="351348"/>
    <lineage>
        <taxon>Bacteria</taxon>
        <taxon>Pseudomonadati</taxon>
        <taxon>Pseudomonadota</taxon>
        <taxon>Gammaproteobacteria</taxon>
        <taxon>Pseudomonadales</taxon>
        <taxon>Marinobacteraceae</taxon>
        <taxon>Marinobacter</taxon>
    </lineage>
</organism>
<comment type="function">
    <text evidence="1">Catalyzes carboxymethyl transfer from carboxy-S-adenosyl-L-methionine (Cx-SAM) to 5-hydroxyuridine (ho5U) to form 5-carboxymethoxyuridine (cmo5U) at position 34 in tRNAs.</text>
</comment>
<comment type="catalytic activity">
    <reaction evidence="1">
        <text>carboxy-S-adenosyl-L-methionine + 5-hydroxyuridine(34) in tRNA = 5-carboxymethoxyuridine(34) in tRNA + S-adenosyl-L-homocysteine + H(+)</text>
        <dbReference type="Rhea" id="RHEA:52848"/>
        <dbReference type="Rhea" id="RHEA-COMP:13381"/>
        <dbReference type="Rhea" id="RHEA-COMP:13383"/>
        <dbReference type="ChEBI" id="CHEBI:15378"/>
        <dbReference type="ChEBI" id="CHEBI:57856"/>
        <dbReference type="ChEBI" id="CHEBI:134278"/>
        <dbReference type="ChEBI" id="CHEBI:136877"/>
        <dbReference type="ChEBI" id="CHEBI:136879"/>
    </reaction>
</comment>
<comment type="subunit">
    <text evidence="1">Homotetramer.</text>
</comment>
<comment type="similarity">
    <text evidence="1">Belongs to the class I-like SAM-binding methyltransferase superfamily. CmoB family.</text>
</comment>
<accession>A1U4B9</accession>
<evidence type="ECO:0000255" key="1">
    <source>
        <dbReference type="HAMAP-Rule" id="MF_01590"/>
    </source>
</evidence>
<evidence type="ECO:0000256" key="2">
    <source>
        <dbReference type="SAM" id="MobiDB-lite"/>
    </source>
</evidence>
<reference key="1">
    <citation type="journal article" date="2011" name="Appl. Environ. Microbiol.">
        <title>Genomic potential of Marinobacter aquaeolei, a biogeochemical 'opportunitroph'.</title>
        <authorList>
            <person name="Singer E."/>
            <person name="Webb E.A."/>
            <person name="Nelson W.C."/>
            <person name="Heidelberg J.F."/>
            <person name="Ivanova N."/>
            <person name="Pati A."/>
            <person name="Edwards K.J."/>
        </authorList>
    </citation>
    <scope>NUCLEOTIDE SEQUENCE [LARGE SCALE GENOMIC DNA]</scope>
    <source>
        <strain>ATCC 700491 / DSM 11845 / VT8</strain>
    </source>
</reference>
<feature type="chain" id="PRO_0000313935" description="tRNA U34 carboxymethyltransferase">
    <location>
        <begin position="1"/>
        <end position="330"/>
    </location>
</feature>
<feature type="region of interest" description="Disordered" evidence="2">
    <location>
        <begin position="309"/>
        <end position="330"/>
    </location>
</feature>
<feature type="binding site" evidence="1">
    <location>
        <position position="98"/>
    </location>
    <ligand>
        <name>carboxy-S-adenosyl-L-methionine</name>
        <dbReference type="ChEBI" id="CHEBI:134278"/>
    </ligand>
</feature>
<feature type="binding site" evidence="1">
    <location>
        <position position="112"/>
    </location>
    <ligand>
        <name>carboxy-S-adenosyl-L-methionine</name>
        <dbReference type="ChEBI" id="CHEBI:134278"/>
    </ligand>
</feature>
<feature type="binding site" evidence="1">
    <location>
        <position position="117"/>
    </location>
    <ligand>
        <name>carboxy-S-adenosyl-L-methionine</name>
        <dbReference type="ChEBI" id="CHEBI:134278"/>
    </ligand>
</feature>
<feature type="binding site" evidence="1">
    <location>
        <position position="137"/>
    </location>
    <ligand>
        <name>carboxy-S-adenosyl-L-methionine</name>
        <dbReference type="ChEBI" id="CHEBI:134278"/>
    </ligand>
</feature>
<feature type="binding site" evidence="1">
    <location>
        <begin position="187"/>
        <end position="188"/>
    </location>
    <ligand>
        <name>carboxy-S-adenosyl-L-methionine</name>
        <dbReference type="ChEBI" id="CHEBI:134278"/>
    </ligand>
</feature>
<feature type="binding site" evidence="1">
    <location>
        <position position="203"/>
    </location>
    <ligand>
        <name>carboxy-S-adenosyl-L-methionine</name>
        <dbReference type="ChEBI" id="CHEBI:134278"/>
    </ligand>
</feature>
<feature type="binding site" evidence="1">
    <location>
        <position position="207"/>
    </location>
    <ligand>
        <name>carboxy-S-adenosyl-L-methionine</name>
        <dbReference type="ChEBI" id="CHEBI:134278"/>
    </ligand>
</feature>
<feature type="binding site" evidence="1">
    <location>
        <position position="322"/>
    </location>
    <ligand>
        <name>carboxy-S-adenosyl-L-methionine</name>
        <dbReference type="ChEBI" id="CHEBI:134278"/>
    </ligand>
</feature>
<keyword id="KW-0808">Transferase</keyword>
<keyword id="KW-0819">tRNA processing</keyword>
<dbReference type="EC" id="2.5.1.-" evidence="1"/>
<dbReference type="EMBL" id="CP000514">
    <property type="protein sequence ID" value="ABM19838.1"/>
    <property type="molecule type" value="Genomic_DNA"/>
</dbReference>
<dbReference type="RefSeq" id="WP_011786208.1">
    <property type="nucleotide sequence ID" value="NC_008740.1"/>
</dbReference>
<dbReference type="SMR" id="A1U4B9"/>
<dbReference type="STRING" id="351348.Maqu_2763"/>
<dbReference type="GeneID" id="31822042"/>
<dbReference type="KEGG" id="maq:Maqu_2763"/>
<dbReference type="eggNOG" id="COG2227">
    <property type="taxonomic scope" value="Bacteria"/>
</dbReference>
<dbReference type="HOGENOM" id="CLU_052665_0_0_6"/>
<dbReference type="OrthoDB" id="9773188at2"/>
<dbReference type="Proteomes" id="UP000000998">
    <property type="component" value="Chromosome"/>
</dbReference>
<dbReference type="GO" id="GO:0008168">
    <property type="term" value="F:methyltransferase activity"/>
    <property type="evidence" value="ECO:0007669"/>
    <property type="project" value="TreeGrafter"/>
</dbReference>
<dbReference type="GO" id="GO:0016765">
    <property type="term" value="F:transferase activity, transferring alkyl or aryl (other than methyl) groups"/>
    <property type="evidence" value="ECO:0007669"/>
    <property type="project" value="UniProtKB-UniRule"/>
</dbReference>
<dbReference type="GO" id="GO:0002098">
    <property type="term" value="P:tRNA wobble uridine modification"/>
    <property type="evidence" value="ECO:0007669"/>
    <property type="project" value="InterPro"/>
</dbReference>
<dbReference type="CDD" id="cd02440">
    <property type="entry name" value="AdoMet_MTases"/>
    <property type="match status" value="1"/>
</dbReference>
<dbReference type="Gene3D" id="3.40.50.150">
    <property type="entry name" value="Vaccinia Virus protein VP39"/>
    <property type="match status" value="1"/>
</dbReference>
<dbReference type="HAMAP" id="MF_01590">
    <property type="entry name" value="tRNA_carboxymethyltr_CmoB"/>
    <property type="match status" value="1"/>
</dbReference>
<dbReference type="InterPro" id="IPR010017">
    <property type="entry name" value="CmoB"/>
</dbReference>
<dbReference type="InterPro" id="IPR027555">
    <property type="entry name" value="Mo5U34_MeTrfas-like"/>
</dbReference>
<dbReference type="InterPro" id="IPR029063">
    <property type="entry name" value="SAM-dependent_MTases_sf"/>
</dbReference>
<dbReference type="NCBIfam" id="NF011650">
    <property type="entry name" value="PRK15068.1"/>
    <property type="match status" value="1"/>
</dbReference>
<dbReference type="NCBIfam" id="TIGR00452">
    <property type="entry name" value="tRNA 5-methoxyuridine(34)/uridine 5-oxyacetic acid(34) synthase CmoB"/>
    <property type="match status" value="1"/>
</dbReference>
<dbReference type="PANTHER" id="PTHR43464">
    <property type="entry name" value="METHYLTRANSFERASE"/>
    <property type="match status" value="1"/>
</dbReference>
<dbReference type="PANTHER" id="PTHR43464:SF95">
    <property type="entry name" value="TRNA U34 CARBOXYMETHYLTRANSFERASE"/>
    <property type="match status" value="1"/>
</dbReference>
<dbReference type="Pfam" id="PF08003">
    <property type="entry name" value="Methyltransf_9"/>
    <property type="match status" value="1"/>
</dbReference>
<dbReference type="SUPFAM" id="SSF53335">
    <property type="entry name" value="S-adenosyl-L-methionine-dependent methyltransferases"/>
    <property type="match status" value="1"/>
</dbReference>